<feature type="chain" id="PRO_0000274790" description="Thioredoxin reductase">
    <location>
        <begin position="1"/>
        <end position="310"/>
    </location>
</feature>
<feature type="binding site" evidence="2">
    <location>
        <begin position="34"/>
        <end position="41"/>
    </location>
    <ligand>
        <name>FAD</name>
        <dbReference type="ChEBI" id="CHEBI:57692"/>
    </ligand>
</feature>
<feature type="binding site" evidence="2">
    <location>
        <begin position="281"/>
        <end position="290"/>
    </location>
    <ligand>
        <name>FAD</name>
        <dbReference type="ChEBI" id="CHEBI:57692"/>
    </ligand>
</feature>
<feature type="disulfide bond" description="Redox-active" evidence="2">
    <location>
        <begin position="135"/>
        <end position="138"/>
    </location>
</feature>
<evidence type="ECO:0000250" key="1"/>
<evidence type="ECO:0000250" key="2">
    <source>
        <dbReference type="UniProtKB" id="P0A9P4"/>
    </source>
</evidence>
<evidence type="ECO:0000305" key="3"/>
<keyword id="KW-0963">Cytoplasm</keyword>
<keyword id="KW-1015">Disulfide bond</keyword>
<keyword id="KW-0274">FAD</keyword>
<keyword id="KW-0285">Flavoprotein</keyword>
<keyword id="KW-0521">NADP</keyword>
<keyword id="KW-0560">Oxidoreductase</keyword>
<keyword id="KW-0676">Redox-active center</keyword>
<protein>
    <recommendedName>
        <fullName>Thioredoxin reductase</fullName>
        <shortName>TRXR</shortName>
        <ecNumber>1.8.1.9</ecNumber>
    </recommendedName>
</protein>
<comment type="catalytic activity">
    <reaction>
        <text>[thioredoxin]-dithiol + NADP(+) = [thioredoxin]-disulfide + NADPH + H(+)</text>
        <dbReference type="Rhea" id="RHEA:20345"/>
        <dbReference type="Rhea" id="RHEA-COMP:10698"/>
        <dbReference type="Rhea" id="RHEA-COMP:10700"/>
        <dbReference type="ChEBI" id="CHEBI:15378"/>
        <dbReference type="ChEBI" id="CHEBI:29950"/>
        <dbReference type="ChEBI" id="CHEBI:50058"/>
        <dbReference type="ChEBI" id="CHEBI:57783"/>
        <dbReference type="ChEBI" id="CHEBI:58349"/>
        <dbReference type="EC" id="1.8.1.9"/>
    </reaction>
</comment>
<comment type="cofactor">
    <cofactor evidence="2">
        <name>FAD</name>
        <dbReference type="ChEBI" id="CHEBI:57692"/>
    </cofactor>
    <text evidence="2">Binds 1 FAD per subunit.</text>
</comment>
<comment type="subunit">
    <text evidence="2">Homodimer.</text>
</comment>
<comment type="subcellular location">
    <subcellularLocation>
        <location evidence="1">Cytoplasm</location>
    </subcellularLocation>
</comment>
<comment type="miscellaneous">
    <text>The active site is a redox-active disulfide bond.</text>
</comment>
<comment type="similarity">
    <text evidence="3">Belongs to the class-II pyridine nucleotide-disulfide oxidoreductase family.</text>
</comment>
<sequence length="310" mass="33621">MKITTKVLIIGSGPAGLSAAIYAARASLNPILINGIQPGGQLTITTDVENYPGFAESVQGPWLMEQMRMQAENVGTKIVNDYVEKVDLSQRPFKVSTGSRTEYEAESIIICTGAEARWLGIPTEQEFMGFGVSACATCDGFFFKNQKVVVVGGGNSAVEEALYLTNHASKVTIVHRRDNFRAEKILQERLFKNPKISVIWDHVVEEIVGNNNPKSVTGVKIQNVHTKETSLVNCSGVFVAIGHKPNTALFAEQVTMDNDNYIITTPGSTKTNIEGVFAAGDVQDKIYRQAITAAGTGCMAALEAEKFLNK</sequence>
<reference key="1">
    <citation type="journal article" date="2006" name="PLoS Genet.">
        <title>Genome sequence of Rickettsia bellii illuminates the role of amoebae in gene exchanges between intracellular pathogens.</title>
        <authorList>
            <person name="Ogata H."/>
            <person name="La Scola B."/>
            <person name="Audic S."/>
            <person name="Renesto P."/>
            <person name="Blanc G."/>
            <person name="Robert C."/>
            <person name="Fournier P.-E."/>
            <person name="Claverie J.-M."/>
            <person name="Raoult D."/>
        </authorList>
    </citation>
    <scope>NUCLEOTIDE SEQUENCE [LARGE SCALE GENOMIC DNA]</scope>
    <source>
        <strain>RML369-C</strain>
    </source>
</reference>
<name>TRXB_RICBR</name>
<accession>Q1RJD8</accession>
<proteinExistence type="inferred from homology"/>
<organism>
    <name type="scientific">Rickettsia bellii (strain RML369-C)</name>
    <dbReference type="NCBI Taxonomy" id="336407"/>
    <lineage>
        <taxon>Bacteria</taxon>
        <taxon>Pseudomonadati</taxon>
        <taxon>Pseudomonadota</taxon>
        <taxon>Alphaproteobacteria</taxon>
        <taxon>Rickettsiales</taxon>
        <taxon>Rickettsiaceae</taxon>
        <taxon>Rickettsieae</taxon>
        <taxon>Rickettsia</taxon>
        <taxon>belli group</taxon>
    </lineage>
</organism>
<dbReference type="EC" id="1.8.1.9"/>
<dbReference type="EMBL" id="CP000087">
    <property type="protein sequence ID" value="ABE04526.1"/>
    <property type="molecule type" value="Genomic_DNA"/>
</dbReference>
<dbReference type="RefSeq" id="WP_011477119.1">
    <property type="nucleotide sequence ID" value="NC_007940.1"/>
</dbReference>
<dbReference type="SMR" id="Q1RJD8"/>
<dbReference type="KEGG" id="rbe:RBE_0445"/>
<dbReference type="eggNOG" id="COG0492">
    <property type="taxonomic scope" value="Bacteria"/>
</dbReference>
<dbReference type="HOGENOM" id="CLU_031864_5_1_5"/>
<dbReference type="OrthoDB" id="9806179at2"/>
<dbReference type="Proteomes" id="UP000001951">
    <property type="component" value="Chromosome"/>
</dbReference>
<dbReference type="GO" id="GO:0005737">
    <property type="term" value="C:cytoplasm"/>
    <property type="evidence" value="ECO:0007669"/>
    <property type="project" value="UniProtKB-SubCell"/>
</dbReference>
<dbReference type="GO" id="GO:0004791">
    <property type="term" value="F:thioredoxin-disulfide reductase (NADPH) activity"/>
    <property type="evidence" value="ECO:0007669"/>
    <property type="project" value="UniProtKB-EC"/>
</dbReference>
<dbReference type="GO" id="GO:0019430">
    <property type="term" value="P:removal of superoxide radicals"/>
    <property type="evidence" value="ECO:0007669"/>
    <property type="project" value="InterPro"/>
</dbReference>
<dbReference type="Gene3D" id="3.50.50.60">
    <property type="entry name" value="FAD/NAD(P)-binding domain"/>
    <property type="match status" value="2"/>
</dbReference>
<dbReference type="InterPro" id="IPR036188">
    <property type="entry name" value="FAD/NAD-bd_sf"/>
</dbReference>
<dbReference type="InterPro" id="IPR023753">
    <property type="entry name" value="FAD/NAD-binding_dom"/>
</dbReference>
<dbReference type="InterPro" id="IPR050097">
    <property type="entry name" value="Ferredoxin-NADP_redctase_2"/>
</dbReference>
<dbReference type="InterPro" id="IPR008255">
    <property type="entry name" value="Pyr_nucl-diS_OxRdtase_2_AS"/>
</dbReference>
<dbReference type="InterPro" id="IPR005982">
    <property type="entry name" value="Thioredox_Rdtase"/>
</dbReference>
<dbReference type="NCBIfam" id="TIGR01292">
    <property type="entry name" value="TRX_reduct"/>
    <property type="match status" value="1"/>
</dbReference>
<dbReference type="PANTHER" id="PTHR48105">
    <property type="entry name" value="THIOREDOXIN REDUCTASE 1-RELATED-RELATED"/>
    <property type="match status" value="1"/>
</dbReference>
<dbReference type="Pfam" id="PF07992">
    <property type="entry name" value="Pyr_redox_2"/>
    <property type="match status" value="1"/>
</dbReference>
<dbReference type="PRINTS" id="PR00368">
    <property type="entry name" value="FADPNR"/>
</dbReference>
<dbReference type="PRINTS" id="PR00469">
    <property type="entry name" value="PNDRDTASEII"/>
</dbReference>
<dbReference type="SUPFAM" id="SSF51905">
    <property type="entry name" value="FAD/NAD(P)-binding domain"/>
    <property type="match status" value="1"/>
</dbReference>
<dbReference type="PROSITE" id="PS00573">
    <property type="entry name" value="PYRIDINE_REDOX_2"/>
    <property type="match status" value="1"/>
</dbReference>
<gene>
    <name type="primary">trxB</name>
    <name type="ordered locus">RBE_0445</name>
</gene>